<evidence type="ECO:0000255" key="1">
    <source>
        <dbReference type="HAMAP-Rule" id="MF_00071"/>
    </source>
</evidence>
<reference key="1">
    <citation type="submission" date="2006-03" db="EMBL/GenBank/DDBJ databases">
        <title>Complete sequence of Methylobacillus flagellatus KT.</title>
        <authorList>
            <consortium name="US DOE Joint Genome Institute"/>
            <person name="Copeland A."/>
            <person name="Lucas S."/>
            <person name="Lapidus A."/>
            <person name="Barry K."/>
            <person name="Detter J.C."/>
            <person name="Glavina del Rio T."/>
            <person name="Hammon N."/>
            <person name="Israni S."/>
            <person name="Dalin E."/>
            <person name="Tice H."/>
            <person name="Pitluck S."/>
            <person name="Brettin T."/>
            <person name="Bruce D."/>
            <person name="Han C."/>
            <person name="Tapia R."/>
            <person name="Saunders E."/>
            <person name="Gilna P."/>
            <person name="Schmutz J."/>
            <person name="Larimer F."/>
            <person name="Land M."/>
            <person name="Kyrpides N."/>
            <person name="Anderson I."/>
            <person name="Richardson P."/>
        </authorList>
    </citation>
    <scope>NUCLEOTIDE SEQUENCE [LARGE SCALE GENOMIC DNA]</scope>
    <source>
        <strain>ATCC 51484 / DSM 6875 / VKM B-1610 / KT</strain>
    </source>
</reference>
<name>LEPA_METFK</name>
<accession>Q1H2L5</accession>
<comment type="function">
    <text evidence="1">Required for accurate and efficient protein synthesis under certain stress conditions. May act as a fidelity factor of the translation reaction, by catalyzing a one-codon backward translocation of tRNAs on improperly translocated ribosomes. Back-translocation proceeds from a post-translocation (POST) complex to a pre-translocation (PRE) complex, thus giving elongation factor G a second chance to translocate the tRNAs correctly. Binds to ribosomes in a GTP-dependent manner.</text>
</comment>
<comment type="catalytic activity">
    <reaction evidence="1">
        <text>GTP + H2O = GDP + phosphate + H(+)</text>
        <dbReference type="Rhea" id="RHEA:19669"/>
        <dbReference type="ChEBI" id="CHEBI:15377"/>
        <dbReference type="ChEBI" id="CHEBI:15378"/>
        <dbReference type="ChEBI" id="CHEBI:37565"/>
        <dbReference type="ChEBI" id="CHEBI:43474"/>
        <dbReference type="ChEBI" id="CHEBI:58189"/>
        <dbReference type="EC" id="3.6.5.n1"/>
    </reaction>
</comment>
<comment type="subcellular location">
    <subcellularLocation>
        <location evidence="1">Cell inner membrane</location>
        <topology evidence="1">Peripheral membrane protein</topology>
        <orientation evidence="1">Cytoplasmic side</orientation>
    </subcellularLocation>
</comment>
<comment type="similarity">
    <text evidence="1">Belongs to the TRAFAC class translation factor GTPase superfamily. Classic translation factor GTPase family. LepA subfamily.</text>
</comment>
<organism>
    <name type="scientific">Methylobacillus flagellatus (strain ATCC 51484 / DSM 6875 / VKM B-1610 / KT)</name>
    <dbReference type="NCBI Taxonomy" id="265072"/>
    <lineage>
        <taxon>Bacteria</taxon>
        <taxon>Pseudomonadati</taxon>
        <taxon>Pseudomonadota</taxon>
        <taxon>Betaproteobacteria</taxon>
        <taxon>Nitrosomonadales</taxon>
        <taxon>Methylophilaceae</taxon>
        <taxon>Methylobacillus</taxon>
    </lineage>
</organism>
<dbReference type="EC" id="3.6.5.n1" evidence="1"/>
<dbReference type="EMBL" id="CP000284">
    <property type="protein sequence ID" value="ABE49128.1"/>
    <property type="molecule type" value="Genomic_DNA"/>
</dbReference>
<dbReference type="EMBL" id="CP000284">
    <property type="protein sequence ID" value="ABE49272.1"/>
    <property type="molecule type" value="Genomic_DNA"/>
</dbReference>
<dbReference type="RefSeq" id="WP_011479225.1">
    <property type="nucleotide sequence ID" value="NC_007947.1"/>
</dbReference>
<dbReference type="SMR" id="Q1H2L5"/>
<dbReference type="STRING" id="265072.Mfla_0860"/>
<dbReference type="KEGG" id="mfa:Mfla_0860"/>
<dbReference type="KEGG" id="mfa:Mfla_1004"/>
<dbReference type="eggNOG" id="COG0481">
    <property type="taxonomic scope" value="Bacteria"/>
</dbReference>
<dbReference type="HOGENOM" id="CLU_009995_3_3_4"/>
<dbReference type="OrthoDB" id="9801472at2"/>
<dbReference type="Proteomes" id="UP000002440">
    <property type="component" value="Chromosome"/>
</dbReference>
<dbReference type="GO" id="GO:0005886">
    <property type="term" value="C:plasma membrane"/>
    <property type="evidence" value="ECO:0007669"/>
    <property type="project" value="UniProtKB-SubCell"/>
</dbReference>
<dbReference type="GO" id="GO:0005525">
    <property type="term" value="F:GTP binding"/>
    <property type="evidence" value="ECO:0007669"/>
    <property type="project" value="UniProtKB-UniRule"/>
</dbReference>
<dbReference type="GO" id="GO:0003924">
    <property type="term" value="F:GTPase activity"/>
    <property type="evidence" value="ECO:0007669"/>
    <property type="project" value="UniProtKB-UniRule"/>
</dbReference>
<dbReference type="GO" id="GO:0097216">
    <property type="term" value="F:guanosine tetraphosphate binding"/>
    <property type="evidence" value="ECO:0007669"/>
    <property type="project" value="UniProtKB-ARBA"/>
</dbReference>
<dbReference type="GO" id="GO:0043022">
    <property type="term" value="F:ribosome binding"/>
    <property type="evidence" value="ECO:0007669"/>
    <property type="project" value="UniProtKB-UniRule"/>
</dbReference>
<dbReference type="GO" id="GO:0003746">
    <property type="term" value="F:translation elongation factor activity"/>
    <property type="evidence" value="ECO:0007669"/>
    <property type="project" value="UniProtKB-UniRule"/>
</dbReference>
<dbReference type="GO" id="GO:0045727">
    <property type="term" value="P:positive regulation of translation"/>
    <property type="evidence" value="ECO:0007669"/>
    <property type="project" value="UniProtKB-UniRule"/>
</dbReference>
<dbReference type="CDD" id="cd03699">
    <property type="entry name" value="EF4_II"/>
    <property type="match status" value="1"/>
</dbReference>
<dbReference type="CDD" id="cd16260">
    <property type="entry name" value="EF4_III"/>
    <property type="match status" value="1"/>
</dbReference>
<dbReference type="CDD" id="cd01890">
    <property type="entry name" value="LepA"/>
    <property type="match status" value="1"/>
</dbReference>
<dbReference type="CDD" id="cd03709">
    <property type="entry name" value="lepA_C"/>
    <property type="match status" value="1"/>
</dbReference>
<dbReference type="FunFam" id="3.40.50.300:FF:000078">
    <property type="entry name" value="Elongation factor 4"/>
    <property type="match status" value="1"/>
</dbReference>
<dbReference type="FunFam" id="2.40.30.10:FF:000015">
    <property type="entry name" value="Translation factor GUF1, mitochondrial"/>
    <property type="match status" value="1"/>
</dbReference>
<dbReference type="FunFam" id="3.30.70.240:FF:000007">
    <property type="entry name" value="Translation factor GUF1, mitochondrial"/>
    <property type="match status" value="1"/>
</dbReference>
<dbReference type="FunFam" id="3.30.70.2570:FF:000001">
    <property type="entry name" value="Translation factor GUF1, mitochondrial"/>
    <property type="match status" value="1"/>
</dbReference>
<dbReference type="FunFam" id="3.30.70.870:FF:000004">
    <property type="entry name" value="Translation factor GUF1, mitochondrial"/>
    <property type="match status" value="1"/>
</dbReference>
<dbReference type="Gene3D" id="3.30.70.240">
    <property type="match status" value="1"/>
</dbReference>
<dbReference type="Gene3D" id="3.30.70.2570">
    <property type="entry name" value="Elongation factor 4, C-terminal domain"/>
    <property type="match status" value="1"/>
</dbReference>
<dbReference type="Gene3D" id="3.30.70.870">
    <property type="entry name" value="Elongation Factor G (Translational Gtpase), domain 3"/>
    <property type="match status" value="1"/>
</dbReference>
<dbReference type="Gene3D" id="3.40.50.300">
    <property type="entry name" value="P-loop containing nucleotide triphosphate hydrolases"/>
    <property type="match status" value="1"/>
</dbReference>
<dbReference type="Gene3D" id="2.40.30.10">
    <property type="entry name" value="Translation factors"/>
    <property type="match status" value="1"/>
</dbReference>
<dbReference type="HAMAP" id="MF_00071">
    <property type="entry name" value="LepA"/>
    <property type="match status" value="1"/>
</dbReference>
<dbReference type="InterPro" id="IPR006297">
    <property type="entry name" value="EF-4"/>
</dbReference>
<dbReference type="InterPro" id="IPR035647">
    <property type="entry name" value="EFG_III/V"/>
</dbReference>
<dbReference type="InterPro" id="IPR000640">
    <property type="entry name" value="EFG_V-like"/>
</dbReference>
<dbReference type="InterPro" id="IPR004161">
    <property type="entry name" value="EFTu-like_2"/>
</dbReference>
<dbReference type="InterPro" id="IPR031157">
    <property type="entry name" value="G_TR_CS"/>
</dbReference>
<dbReference type="InterPro" id="IPR038363">
    <property type="entry name" value="LepA_C_sf"/>
</dbReference>
<dbReference type="InterPro" id="IPR013842">
    <property type="entry name" value="LepA_CTD"/>
</dbReference>
<dbReference type="InterPro" id="IPR035654">
    <property type="entry name" value="LepA_IV"/>
</dbReference>
<dbReference type="InterPro" id="IPR027417">
    <property type="entry name" value="P-loop_NTPase"/>
</dbReference>
<dbReference type="InterPro" id="IPR005225">
    <property type="entry name" value="Small_GTP-bd"/>
</dbReference>
<dbReference type="InterPro" id="IPR000795">
    <property type="entry name" value="T_Tr_GTP-bd_dom"/>
</dbReference>
<dbReference type="InterPro" id="IPR009000">
    <property type="entry name" value="Transl_B-barrel_sf"/>
</dbReference>
<dbReference type="NCBIfam" id="TIGR01393">
    <property type="entry name" value="lepA"/>
    <property type="match status" value="1"/>
</dbReference>
<dbReference type="NCBIfam" id="TIGR00231">
    <property type="entry name" value="small_GTP"/>
    <property type="match status" value="1"/>
</dbReference>
<dbReference type="PANTHER" id="PTHR43512:SF4">
    <property type="entry name" value="TRANSLATION FACTOR GUF1 HOMOLOG, CHLOROPLASTIC"/>
    <property type="match status" value="1"/>
</dbReference>
<dbReference type="PANTHER" id="PTHR43512">
    <property type="entry name" value="TRANSLATION FACTOR GUF1-RELATED"/>
    <property type="match status" value="1"/>
</dbReference>
<dbReference type="Pfam" id="PF00679">
    <property type="entry name" value="EFG_C"/>
    <property type="match status" value="1"/>
</dbReference>
<dbReference type="Pfam" id="PF00009">
    <property type="entry name" value="GTP_EFTU"/>
    <property type="match status" value="1"/>
</dbReference>
<dbReference type="Pfam" id="PF03144">
    <property type="entry name" value="GTP_EFTU_D2"/>
    <property type="match status" value="1"/>
</dbReference>
<dbReference type="Pfam" id="PF06421">
    <property type="entry name" value="LepA_C"/>
    <property type="match status" value="1"/>
</dbReference>
<dbReference type="PRINTS" id="PR00315">
    <property type="entry name" value="ELONGATNFCT"/>
</dbReference>
<dbReference type="SMART" id="SM00838">
    <property type="entry name" value="EFG_C"/>
    <property type="match status" value="1"/>
</dbReference>
<dbReference type="SUPFAM" id="SSF54980">
    <property type="entry name" value="EF-G C-terminal domain-like"/>
    <property type="match status" value="2"/>
</dbReference>
<dbReference type="SUPFAM" id="SSF52540">
    <property type="entry name" value="P-loop containing nucleoside triphosphate hydrolases"/>
    <property type="match status" value="1"/>
</dbReference>
<dbReference type="SUPFAM" id="SSF50447">
    <property type="entry name" value="Translation proteins"/>
    <property type="match status" value="1"/>
</dbReference>
<dbReference type="PROSITE" id="PS00301">
    <property type="entry name" value="G_TR_1"/>
    <property type="match status" value="1"/>
</dbReference>
<dbReference type="PROSITE" id="PS51722">
    <property type="entry name" value="G_TR_2"/>
    <property type="match status" value="1"/>
</dbReference>
<proteinExistence type="inferred from homology"/>
<protein>
    <recommendedName>
        <fullName evidence="1">Elongation factor 4</fullName>
        <shortName evidence="1">EF-4</shortName>
        <ecNumber evidence="1">3.6.5.n1</ecNumber>
    </recommendedName>
    <alternativeName>
        <fullName evidence="1">Ribosomal back-translocase LepA</fullName>
    </alternativeName>
</protein>
<feature type="chain" id="PRO_0000265674" description="Elongation factor 4">
    <location>
        <begin position="1"/>
        <end position="597"/>
    </location>
</feature>
<feature type="domain" description="tr-type G">
    <location>
        <begin position="2"/>
        <end position="184"/>
    </location>
</feature>
<feature type="binding site" evidence="1">
    <location>
        <begin position="14"/>
        <end position="19"/>
    </location>
    <ligand>
        <name>GTP</name>
        <dbReference type="ChEBI" id="CHEBI:37565"/>
    </ligand>
</feature>
<feature type="binding site" evidence="1">
    <location>
        <begin position="131"/>
        <end position="134"/>
    </location>
    <ligand>
        <name>GTP</name>
        <dbReference type="ChEBI" id="CHEBI:37565"/>
    </ligand>
</feature>
<gene>
    <name evidence="1" type="primary">lepA1</name>
    <name type="ordered locus">Mfla_0860</name>
</gene>
<gene>
    <name evidence="1" type="primary">lepA2</name>
    <name type="ordered locus">Mfla_1004</name>
</gene>
<keyword id="KW-0997">Cell inner membrane</keyword>
<keyword id="KW-1003">Cell membrane</keyword>
<keyword id="KW-0342">GTP-binding</keyword>
<keyword id="KW-0378">Hydrolase</keyword>
<keyword id="KW-0472">Membrane</keyword>
<keyword id="KW-0547">Nucleotide-binding</keyword>
<keyword id="KW-0648">Protein biosynthesis</keyword>
<keyword id="KW-1185">Reference proteome</keyword>
<sequence>MKNIRNFSIIAHIDHGKSTLADRIIQLCGGLSDREMEAQVLDSMDIERERGITIKAQTAALEYKALDGQVYNLNLIDTPGHVDFSYEVSRSLAACEGALLVVDASQGVEAQSVANCYTAIDQGVEVVPVLNKIDLPAADPERVMQEIEDVIGVDASEAVRCSAKTGVGVQDVLETMIAKIPPPVGDPEKPLKALIIDSWFDNYVGVIMLVRVVDGVLKPKDKIRMMATKATYLCEQVGVFTPKSRPRASLSAGEVGFIIAGIKELTSAKVGDTVTLADRPASEALPGFKEVKPQVFAGLYPVESNQFEALREALEKLRLNDASLQFEPENSSALGFGFRCGFLGLLHMEIVQERLEREYDMDLITTAPTVVYELLLKSGEVVQIENPSRLPEPSRITEIREPIITINLLMPQDYVGPVMTLCNNKRGVQRNMQYMGRQVMLSYEMPLNEVVLDFFDRLKSVSRGYASMDYEFLEFRAADLVKLDIMVNGERVDALSLIVHRSNSVYRGRELVSKMRELIPRQMFDIAVQASIGANIIARETVKAMRKNVLAKCYGGDITRKKKLLEKQKEGKKRMKQVGNVEIPQEAFLAILRVEDK</sequence>